<name>VM2C_PROFL</name>
<accession>P23323</accession>
<organism>
    <name type="scientific">Protobothrops flavoviridis</name>
    <name type="common">Habu</name>
    <name type="synonym">Trimeresurus flavoviridis</name>
    <dbReference type="NCBI Taxonomy" id="88087"/>
    <lineage>
        <taxon>Eukaryota</taxon>
        <taxon>Metazoa</taxon>
        <taxon>Chordata</taxon>
        <taxon>Craniata</taxon>
        <taxon>Vertebrata</taxon>
        <taxon>Euteleostomi</taxon>
        <taxon>Lepidosauria</taxon>
        <taxon>Squamata</taxon>
        <taxon>Bifurcata</taxon>
        <taxon>Unidentata</taxon>
        <taxon>Episquamata</taxon>
        <taxon>Toxicofera</taxon>
        <taxon>Serpentes</taxon>
        <taxon>Colubroidea</taxon>
        <taxon>Viperidae</taxon>
        <taxon>Crotalinae</taxon>
        <taxon>Protobothrops</taxon>
    </lineage>
</organism>
<proteinExistence type="evidence at protein level"/>
<dbReference type="PIR" id="JX0169">
    <property type="entry name" value="JX0169"/>
</dbReference>
<dbReference type="SMR" id="P23323"/>
<dbReference type="GO" id="GO:0005576">
    <property type="term" value="C:extracellular region"/>
    <property type="evidence" value="ECO:0007669"/>
    <property type="project" value="UniProtKB-SubCell"/>
</dbReference>
<dbReference type="GO" id="GO:0090729">
    <property type="term" value="F:toxin activity"/>
    <property type="evidence" value="ECO:0007669"/>
    <property type="project" value="UniProtKB-KW"/>
</dbReference>
<dbReference type="FunFam" id="4.10.70.10:FF:000005">
    <property type="entry name" value="Zinc metalloproteinase/disintegrin"/>
    <property type="match status" value="1"/>
</dbReference>
<dbReference type="Gene3D" id="4.10.70.10">
    <property type="entry name" value="Disintegrin domain"/>
    <property type="match status" value="1"/>
</dbReference>
<dbReference type="InterPro" id="IPR018358">
    <property type="entry name" value="Disintegrin_CS"/>
</dbReference>
<dbReference type="InterPro" id="IPR001762">
    <property type="entry name" value="Disintegrin_dom"/>
</dbReference>
<dbReference type="InterPro" id="IPR036436">
    <property type="entry name" value="Disintegrin_dom_sf"/>
</dbReference>
<dbReference type="PANTHER" id="PTHR11905">
    <property type="entry name" value="ADAM A DISINTEGRIN AND METALLOPROTEASE DOMAIN"/>
    <property type="match status" value="1"/>
</dbReference>
<dbReference type="PANTHER" id="PTHR11905:SF159">
    <property type="entry name" value="ADAM METALLOPROTEASE"/>
    <property type="match status" value="1"/>
</dbReference>
<dbReference type="Pfam" id="PF00200">
    <property type="entry name" value="Disintegrin"/>
    <property type="match status" value="1"/>
</dbReference>
<dbReference type="PRINTS" id="PR00289">
    <property type="entry name" value="DISINTEGRIN"/>
</dbReference>
<dbReference type="SMART" id="SM00050">
    <property type="entry name" value="DISIN"/>
    <property type="match status" value="1"/>
</dbReference>
<dbReference type="SUPFAM" id="SSF57552">
    <property type="entry name" value="Blood coagulation inhibitor (disintegrin)"/>
    <property type="match status" value="1"/>
</dbReference>
<dbReference type="PROSITE" id="PS00427">
    <property type="entry name" value="DISINTEGRIN_1"/>
    <property type="match status" value="1"/>
</dbReference>
<dbReference type="PROSITE" id="PS50214">
    <property type="entry name" value="DISINTEGRIN_2"/>
    <property type="match status" value="1"/>
</dbReference>
<feature type="chain" id="PRO_0000007244" description="Disintegrin CTF-II" evidence="4">
    <location>
        <begin position="1"/>
        <end position="75"/>
    </location>
</feature>
<feature type="chain" id="PRO_0000007245" description="Disintegrin CTF-I" evidence="4">
    <location>
        <begin position="4"/>
        <end position="75"/>
    </location>
</feature>
<feature type="domain" description="Disintegrin" evidence="3">
    <location>
        <begin position="1"/>
        <end position="75"/>
    </location>
</feature>
<feature type="short sequence motif" description="Cell attachment site">
    <location>
        <begin position="54"/>
        <end position="56"/>
    </location>
</feature>
<feature type="disulfide bond" evidence="2">
    <location>
        <begin position="9"/>
        <end position="24"/>
    </location>
</feature>
<feature type="disulfide bond" evidence="2">
    <location>
        <begin position="11"/>
        <end position="19"/>
    </location>
</feature>
<feature type="disulfide bond" evidence="2">
    <location>
        <begin position="18"/>
        <end position="41"/>
    </location>
</feature>
<feature type="disulfide bond" evidence="2">
    <location>
        <begin position="32"/>
        <end position="38"/>
    </location>
</feature>
<feature type="disulfide bond" evidence="2">
    <location>
        <begin position="37"/>
        <end position="62"/>
    </location>
</feature>
<feature type="disulfide bond" evidence="2 3">
    <location>
        <begin position="50"/>
        <end position="69"/>
    </location>
</feature>
<comment type="function">
    <text evidence="1">Inhibits fibrinogen interaction with platelet receptors, and inhibits aggregation induced by ADP, thrombin, collagen and platelet-activating factor. Acts by binding to the alpha-IIb/beta-3 (ITGA2B/ITGB3) on the platelet surface (By similarity).</text>
</comment>
<comment type="subunit">
    <text evidence="1">Monomer (disintegrin).</text>
</comment>
<comment type="subcellular location">
    <subcellularLocation>
        <location evidence="4">Secreted</location>
    </subcellularLocation>
</comment>
<comment type="tissue specificity">
    <text evidence="6">Expressed by the venom gland.</text>
</comment>
<comment type="miscellaneous">
    <text>The disintegrin belongs to the medium disintegrin subfamily.</text>
</comment>
<comment type="similarity">
    <text evidence="5">Belongs to the venom metalloproteinase (M12B) family. P-II subfamily. P-IIa sub-subfamily.</text>
</comment>
<sequence>ELLEEGEDCYCHIPPNPCCDPATCKLTPGSQCAEGLCCDQCRFKKKGTICRIARGDFPDDRCTGLSDDCPRWNDL</sequence>
<protein>
    <recommendedName>
        <fullName>Disintegrin CTF-II</fullName>
    </recommendedName>
    <alternativeName>
        <fullName>Cytotoxic factor 2</fullName>
    </alternativeName>
    <component>
        <recommendedName>
            <fullName>Disintegrin CTF-I</fullName>
        </recommendedName>
        <alternativeName>
            <fullName>Cytotoxic factor 1</fullName>
        </alternativeName>
    </component>
</protein>
<reference key="1">
    <citation type="journal article" date="1991" name="J. Biochem.">
        <title>Primary structures of cytotoxic factors isolated from habu (Trimeresurus flavoviridis) venom.</title>
        <authorList>
            <person name="Yamakawa Y."/>
            <person name="Omori-Satoh T."/>
            <person name="Maeyama J."/>
        </authorList>
    </citation>
    <scope>PROTEIN SEQUENCE</scope>
    <scope>SUBCELLULAR LOCATION</scope>
    <source>
        <tissue>Venom</tissue>
    </source>
</reference>
<keyword id="KW-1217">Cell adhesion impairing toxin</keyword>
<keyword id="KW-0903">Direct protein sequencing</keyword>
<keyword id="KW-1015">Disulfide bond</keyword>
<keyword id="KW-1199">Hemostasis impairing toxin</keyword>
<keyword id="KW-1201">Platelet aggregation inhibiting toxin</keyword>
<keyword id="KW-0964">Secreted</keyword>
<keyword id="KW-0800">Toxin</keyword>
<evidence type="ECO:0000250" key="1"/>
<evidence type="ECO:0000250" key="2">
    <source>
        <dbReference type="UniProtKB" id="Q0NZX5"/>
    </source>
</evidence>
<evidence type="ECO:0000255" key="3">
    <source>
        <dbReference type="PROSITE-ProRule" id="PRU00068"/>
    </source>
</evidence>
<evidence type="ECO:0000269" key="4">
    <source>
    </source>
</evidence>
<evidence type="ECO:0000305" key="5"/>
<evidence type="ECO:0000305" key="6">
    <source>
    </source>
</evidence>